<proteinExistence type="inferred from homology"/>
<accession>Q6BPF8</accession>
<evidence type="ECO:0000250" key="1"/>
<evidence type="ECO:0000255" key="2"/>
<evidence type="ECO:0000256" key="3">
    <source>
        <dbReference type="SAM" id="MobiDB-lite"/>
    </source>
</evidence>
<evidence type="ECO:0000305" key="4"/>
<sequence>MKKQFLNYYEILSQVWFNKYTIILVLMTIKIYLFTNSILSNLTNFKAYTESICTSLDTYSTVIASLPEQLSKVINHMVASTLNSMKMQSLKMLMTIITIIKSLIVFYIDIFLGTYICILTAAIGGTVDFALDSTQSVLKSVNETIISVSEDIQDGLNGLSKVINTLLSGVDKVKSFFTNQDTDSTEYVDKVNLSIKALQNIKIPNSVLTDIDNFKDKVPDFNELQNTSKLVSKPFEIITQELNESAHFKNITVDQLKLASTPPVNFCSNSLDIDKFYSNLAKKVQFTSNIIIIVLLIMAMFAIASLVVVEYFKWRKSQRMINEILADKNQESYFVSTRNIMNKYNSSLIYYIEKFVTIPPSRKDNLYWLLSYITTPYSLTVLIIGLAGLFTVMLQFIILQIILKSFKSLTTELTGFKTQIITLMDNATSSYIKETNSYIGSQQKSINDELFGNIRTASTSVNSTINDFLMKMNTTINSVFANTPFSKPVNTLVYCTIGRKLIKIEQGLTWIVENLSVSLPQLPKNLTEDFMTNYSKDNHGIHKLTDNVTSGITFLLDTYKKSLLIELYISSAILGIWILQIIIGLTLIWYRSSSNCKARKPEKIQGEPTIGNPKPLTTEQRKEYGYPHIDPFNEKVDASSSIYSL</sequence>
<keyword id="KW-1003">Cell membrane</keyword>
<keyword id="KW-0184">Conjugation</keyword>
<keyword id="KW-0325">Glycoprotein</keyword>
<keyword id="KW-0472">Membrane</keyword>
<keyword id="KW-1185">Reference proteome</keyword>
<keyword id="KW-0812">Transmembrane</keyword>
<keyword id="KW-1133">Transmembrane helix</keyword>
<dbReference type="EMBL" id="CR382137">
    <property type="protein sequence ID" value="CAG88154.2"/>
    <property type="molecule type" value="Genomic_DNA"/>
</dbReference>
<dbReference type="RefSeq" id="XP_459912.2">
    <property type="nucleotide sequence ID" value="XM_459912.1"/>
</dbReference>
<dbReference type="FunCoup" id="Q6BPF8">
    <property type="interactions" value="53"/>
</dbReference>
<dbReference type="STRING" id="284592.Q6BPF8"/>
<dbReference type="GlyCosmos" id="Q6BPF8">
    <property type="glycosylation" value="11 sites, No reported glycans"/>
</dbReference>
<dbReference type="GeneID" id="2901980"/>
<dbReference type="KEGG" id="dha:DEHA2E13948g"/>
<dbReference type="VEuPathDB" id="FungiDB:DEHA2E13948g"/>
<dbReference type="eggNOG" id="ENOG502QRP5">
    <property type="taxonomic scope" value="Eukaryota"/>
</dbReference>
<dbReference type="HOGENOM" id="CLU_010191_1_0_1"/>
<dbReference type="InParanoid" id="Q6BPF8"/>
<dbReference type="OMA" id="NVFGWVN"/>
<dbReference type="OrthoDB" id="5356111at2759"/>
<dbReference type="Proteomes" id="UP000000599">
    <property type="component" value="Chromosome E"/>
</dbReference>
<dbReference type="GO" id="GO:0043332">
    <property type="term" value="C:mating projection tip"/>
    <property type="evidence" value="ECO:0007669"/>
    <property type="project" value="InterPro"/>
</dbReference>
<dbReference type="GO" id="GO:0005886">
    <property type="term" value="C:plasma membrane"/>
    <property type="evidence" value="ECO:0007669"/>
    <property type="project" value="UniProtKB-SubCell"/>
</dbReference>
<dbReference type="GO" id="GO:0032220">
    <property type="term" value="P:plasma membrane fusion involved in cytogamy"/>
    <property type="evidence" value="ECO:0007669"/>
    <property type="project" value="TreeGrafter"/>
</dbReference>
<dbReference type="InterPro" id="IPR026777">
    <property type="entry name" value="PRM1"/>
</dbReference>
<dbReference type="PANTHER" id="PTHR31030">
    <property type="entry name" value="PLASMA MEMBRANE FUSION PROTEIN PRM1"/>
    <property type="match status" value="1"/>
</dbReference>
<dbReference type="PANTHER" id="PTHR31030:SF1">
    <property type="entry name" value="PLASMA MEMBRANE FUSION PROTEIN PRM1"/>
    <property type="match status" value="1"/>
</dbReference>
<feature type="chain" id="PRO_0000337280" description="Plasma membrane fusion protein PRM1">
    <location>
        <begin position="1"/>
        <end position="645"/>
    </location>
</feature>
<feature type="topological domain" description="Extracellular" evidence="1">
    <location>
        <begin position="1"/>
        <end position="21"/>
    </location>
</feature>
<feature type="transmembrane region" description="Helical" evidence="2">
    <location>
        <begin position="22"/>
        <end position="42"/>
    </location>
</feature>
<feature type="topological domain" description="Cytoplasmic" evidence="1">
    <location>
        <begin position="43"/>
        <end position="102"/>
    </location>
</feature>
<feature type="transmembrane region" description="Helical" evidence="2">
    <location>
        <begin position="103"/>
        <end position="123"/>
    </location>
</feature>
<feature type="topological domain" description="Extracellular" evidence="1">
    <location>
        <begin position="124"/>
        <end position="289"/>
    </location>
</feature>
<feature type="transmembrane region" description="Helical" evidence="2">
    <location>
        <begin position="290"/>
        <end position="310"/>
    </location>
</feature>
<feature type="topological domain" description="Cytoplasmic" evidence="1">
    <location>
        <begin position="311"/>
        <end position="378"/>
    </location>
</feature>
<feature type="transmembrane region" description="Helical" evidence="2">
    <location>
        <begin position="379"/>
        <end position="399"/>
    </location>
</feature>
<feature type="topological domain" description="Extracellular" evidence="1">
    <location>
        <begin position="400"/>
        <end position="568"/>
    </location>
</feature>
<feature type="transmembrane region" description="Helical" evidence="2">
    <location>
        <begin position="569"/>
        <end position="589"/>
    </location>
</feature>
<feature type="topological domain" description="Cytoplasmic" evidence="1">
    <location>
        <begin position="590"/>
        <end position="645"/>
    </location>
</feature>
<feature type="region of interest" description="Disordered" evidence="3">
    <location>
        <begin position="624"/>
        <end position="645"/>
    </location>
</feature>
<feature type="compositionally biased region" description="Basic and acidic residues" evidence="3">
    <location>
        <begin position="624"/>
        <end position="637"/>
    </location>
</feature>
<feature type="glycosylation site" description="N-linked (GlcNAc...) asparagine" evidence="2">
    <location>
        <position position="142"/>
    </location>
</feature>
<feature type="glycosylation site" description="N-linked (GlcNAc...) asparagine" evidence="2">
    <location>
        <position position="192"/>
    </location>
</feature>
<feature type="glycosylation site" description="N-linked (GlcNAc...) asparagine" evidence="2">
    <location>
        <position position="226"/>
    </location>
</feature>
<feature type="glycosylation site" description="N-linked (GlcNAc...) asparagine" evidence="2">
    <location>
        <position position="250"/>
    </location>
</feature>
<feature type="glycosylation site" description="N-linked (GlcNAc...) asparagine" evidence="2">
    <location>
        <position position="426"/>
    </location>
</feature>
<feature type="glycosylation site" description="N-linked (GlcNAc...) asparagine" evidence="2">
    <location>
        <position position="462"/>
    </location>
</feature>
<feature type="glycosylation site" description="N-linked (GlcNAc...) asparagine" evidence="2">
    <location>
        <position position="473"/>
    </location>
</feature>
<feature type="glycosylation site" description="N-linked (GlcNAc...) asparagine" evidence="2">
    <location>
        <position position="514"/>
    </location>
</feature>
<feature type="glycosylation site" description="N-linked (GlcNAc...) asparagine" evidence="2">
    <location>
        <position position="525"/>
    </location>
</feature>
<feature type="glycosylation site" description="N-linked (GlcNAc...) asparagine" evidence="2">
    <location>
        <position position="533"/>
    </location>
</feature>
<feature type="glycosylation site" description="N-linked (GlcNAc...) asparagine" evidence="2">
    <location>
        <position position="547"/>
    </location>
</feature>
<protein>
    <recommendedName>
        <fullName>Plasma membrane fusion protein PRM1</fullName>
    </recommendedName>
</protein>
<name>PRM1_DEBHA</name>
<reference key="1">
    <citation type="journal article" date="2004" name="Nature">
        <title>Genome evolution in yeasts.</title>
        <authorList>
            <person name="Dujon B."/>
            <person name="Sherman D."/>
            <person name="Fischer G."/>
            <person name="Durrens P."/>
            <person name="Casaregola S."/>
            <person name="Lafontaine I."/>
            <person name="de Montigny J."/>
            <person name="Marck C."/>
            <person name="Neuveglise C."/>
            <person name="Talla E."/>
            <person name="Goffard N."/>
            <person name="Frangeul L."/>
            <person name="Aigle M."/>
            <person name="Anthouard V."/>
            <person name="Babour A."/>
            <person name="Barbe V."/>
            <person name="Barnay S."/>
            <person name="Blanchin S."/>
            <person name="Beckerich J.-M."/>
            <person name="Beyne E."/>
            <person name="Bleykasten C."/>
            <person name="Boisrame A."/>
            <person name="Boyer J."/>
            <person name="Cattolico L."/>
            <person name="Confanioleri F."/>
            <person name="de Daruvar A."/>
            <person name="Despons L."/>
            <person name="Fabre E."/>
            <person name="Fairhead C."/>
            <person name="Ferry-Dumazet H."/>
            <person name="Groppi A."/>
            <person name="Hantraye F."/>
            <person name="Hennequin C."/>
            <person name="Jauniaux N."/>
            <person name="Joyet P."/>
            <person name="Kachouri R."/>
            <person name="Kerrest A."/>
            <person name="Koszul R."/>
            <person name="Lemaire M."/>
            <person name="Lesur I."/>
            <person name="Ma L."/>
            <person name="Muller H."/>
            <person name="Nicaud J.-M."/>
            <person name="Nikolski M."/>
            <person name="Oztas S."/>
            <person name="Ozier-Kalogeropoulos O."/>
            <person name="Pellenz S."/>
            <person name="Potier S."/>
            <person name="Richard G.-F."/>
            <person name="Straub M.-L."/>
            <person name="Suleau A."/>
            <person name="Swennen D."/>
            <person name="Tekaia F."/>
            <person name="Wesolowski-Louvel M."/>
            <person name="Westhof E."/>
            <person name="Wirth B."/>
            <person name="Zeniou-Meyer M."/>
            <person name="Zivanovic Y."/>
            <person name="Bolotin-Fukuhara M."/>
            <person name="Thierry A."/>
            <person name="Bouchier C."/>
            <person name="Caudron B."/>
            <person name="Scarpelli C."/>
            <person name="Gaillardin C."/>
            <person name="Weissenbach J."/>
            <person name="Wincker P."/>
            <person name="Souciet J.-L."/>
        </authorList>
    </citation>
    <scope>NUCLEOTIDE SEQUENCE [LARGE SCALE GENOMIC DNA]</scope>
    <source>
        <strain>ATCC 36239 / CBS 767 / BCRC 21394 / JCM 1990 / NBRC 0083 / IGC 2968</strain>
    </source>
</reference>
<gene>
    <name type="primary">PRM1</name>
    <name type="ordered locus">DEHA2E13948g</name>
</gene>
<comment type="function">
    <text evidence="1">Involved in cell fusion during mating by stabilizing the plasma membrane fusion event.</text>
</comment>
<comment type="subcellular location">
    <subcellularLocation>
        <location evidence="1">Cell membrane</location>
        <topology evidence="1">Multi-pass membrane protein</topology>
    </subcellularLocation>
</comment>
<comment type="similarity">
    <text evidence="4">Belongs to the PRM1 family.</text>
</comment>
<organism>
    <name type="scientific">Debaryomyces hansenii (strain ATCC 36239 / CBS 767 / BCRC 21394 / JCM 1990 / NBRC 0083 / IGC 2968)</name>
    <name type="common">Yeast</name>
    <name type="synonym">Torulaspora hansenii</name>
    <dbReference type="NCBI Taxonomy" id="284592"/>
    <lineage>
        <taxon>Eukaryota</taxon>
        <taxon>Fungi</taxon>
        <taxon>Dikarya</taxon>
        <taxon>Ascomycota</taxon>
        <taxon>Saccharomycotina</taxon>
        <taxon>Pichiomycetes</taxon>
        <taxon>Debaryomycetaceae</taxon>
        <taxon>Debaryomyces</taxon>
    </lineage>
</organism>